<reference key="1">
    <citation type="submission" date="2008-10" db="EMBL/GenBank/DDBJ databases">
        <title>Genome sequence of Bacillus cereus AH187.</title>
        <authorList>
            <person name="Dodson R.J."/>
            <person name="Durkin A.S."/>
            <person name="Rosovitz M.J."/>
            <person name="Rasko D.A."/>
            <person name="Kolsto A.B."/>
            <person name="Okstad O.A."/>
            <person name="Ravel J."/>
            <person name="Sutton G."/>
        </authorList>
    </citation>
    <scope>NUCLEOTIDE SEQUENCE [LARGE SCALE GENOMIC DNA]</scope>
    <source>
        <strain>AH187</strain>
    </source>
</reference>
<dbReference type="EC" id="1.14.14.18" evidence="1"/>
<dbReference type="EMBL" id="CP001177">
    <property type="protein sequence ID" value="ACJ79438.1"/>
    <property type="molecule type" value="Genomic_DNA"/>
</dbReference>
<dbReference type="SMR" id="B7HRI4"/>
<dbReference type="KEGG" id="bcr:BCAH187_A4669"/>
<dbReference type="HOGENOM" id="CLU_141544_2_1_9"/>
<dbReference type="Proteomes" id="UP000002214">
    <property type="component" value="Chromosome"/>
</dbReference>
<dbReference type="GO" id="GO:0005737">
    <property type="term" value="C:cytoplasm"/>
    <property type="evidence" value="ECO:0007669"/>
    <property type="project" value="UniProtKB-SubCell"/>
</dbReference>
<dbReference type="GO" id="GO:0020037">
    <property type="term" value="F:heme binding"/>
    <property type="evidence" value="ECO:0007669"/>
    <property type="project" value="UniProtKB-UniRule"/>
</dbReference>
<dbReference type="GO" id="GO:0004392">
    <property type="term" value="F:heme oxygenase (decyclizing) activity"/>
    <property type="evidence" value="ECO:0007669"/>
    <property type="project" value="UniProtKB-UniRule"/>
</dbReference>
<dbReference type="GO" id="GO:0005506">
    <property type="term" value="F:iron ion binding"/>
    <property type="evidence" value="ECO:0007669"/>
    <property type="project" value="UniProtKB-UniRule"/>
</dbReference>
<dbReference type="GO" id="GO:0042167">
    <property type="term" value="P:heme catabolic process"/>
    <property type="evidence" value="ECO:0007669"/>
    <property type="project" value="UniProtKB-UniRule"/>
</dbReference>
<dbReference type="GO" id="GO:0033212">
    <property type="term" value="P:iron import into cell"/>
    <property type="evidence" value="ECO:0007669"/>
    <property type="project" value="InterPro"/>
</dbReference>
<dbReference type="Gene3D" id="3.30.70.100">
    <property type="match status" value="1"/>
</dbReference>
<dbReference type="HAMAP" id="MF_01272">
    <property type="entry name" value="Heme_degrading_monooxygenase"/>
    <property type="match status" value="1"/>
</dbReference>
<dbReference type="InterPro" id="IPR007138">
    <property type="entry name" value="ABM_dom"/>
</dbReference>
<dbReference type="InterPro" id="IPR011008">
    <property type="entry name" value="Dimeric_a/b-barrel"/>
</dbReference>
<dbReference type="InterPro" id="IPR050404">
    <property type="entry name" value="Heme-degrading_MO"/>
</dbReference>
<dbReference type="InterPro" id="IPR023953">
    <property type="entry name" value="IsdG"/>
</dbReference>
<dbReference type="NCBIfam" id="NF009839">
    <property type="entry name" value="PRK13314.1"/>
    <property type="match status" value="1"/>
</dbReference>
<dbReference type="PANTHER" id="PTHR34474:SF4">
    <property type="entry name" value="HEME OXYGENASE (STAPHYLOBILIN-PRODUCING) 1"/>
    <property type="match status" value="1"/>
</dbReference>
<dbReference type="PANTHER" id="PTHR34474">
    <property type="entry name" value="SIGNAL TRANSDUCTION PROTEIN TRAP"/>
    <property type="match status" value="1"/>
</dbReference>
<dbReference type="Pfam" id="PF03992">
    <property type="entry name" value="ABM"/>
    <property type="match status" value="1"/>
</dbReference>
<dbReference type="SUPFAM" id="SSF54909">
    <property type="entry name" value="Dimeric alpha+beta barrel"/>
    <property type="match status" value="1"/>
</dbReference>
<dbReference type="PROSITE" id="PS51725">
    <property type="entry name" value="ABM"/>
    <property type="match status" value="1"/>
</dbReference>
<proteinExistence type="inferred from homology"/>
<name>HDOX_BACC7</name>
<evidence type="ECO:0000255" key="1">
    <source>
        <dbReference type="HAMAP-Rule" id="MF_01272"/>
    </source>
</evidence>
<keyword id="KW-0963">Cytoplasm</keyword>
<keyword id="KW-0349">Heme</keyword>
<keyword id="KW-0408">Iron</keyword>
<keyword id="KW-0479">Metal-binding</keyword>
<keyword id="KW-0503">Monooxygenase</keyword>
<keyword id="KW-0560">Oxidoreductase</keyword>
<feature type="chain" id="PRO_1000140204" description="Heme-degrading monooxygenase">
    <location>
        <begin position="1"/>
        <end position="107"/>
    </location>
</feature>
<feature type="domain" description="ABM" evidence="1">
    <location>
        <begin position="2"/>
        <end position="94"/>
    </location>
</feature>
<feature type="binding site" evidence="1">
    <location>
        <position position="6"/>
    </location>
    <ligand>
        <name>Fe cation</name>
        <dbReference type="ChEBI" id="CHEBI:24875"/>
    </ligand>
</feature>
<feature type="binding site" description="axial binding residue" evidence="1">
    <location>
        <position position="76"/>
    </location>
    <ligand>
        <name>heme</name>
        <dbReference type="ChEBI" id="CHEBI:30413"/>
    </ligand>
    <ligandPart>
        <name>Fe</name>
        <dbReference type="ChEBI" id="CHEBI:18248"/>
    </ligandPart>
</feature>
<feature type="site" description="Transition state stabilizer" evidence="1">
    <location>
        <position position="66"/>
    </location>
</feature>
<organism>
    <name type="scientific">Bacillus cereus (strain AH187)</name>
    <dbReference type="NCBI Taxonomy" id="405534"/>
    <lineage>
        <taxon>Bacteria</taxon>
        <taxon>Bacillati</taxon>
        <taxon>Bacillota</taxon>
        <taxon>Bacilli</taxon>
        <taxon>Bacillales</taxon>
        <taxon>Bacillaceae</taxon>
        <taxon>Bacillus</taxon>
        <taxon>Bacillus cereus group</taxon>
    </lineage>
</organism>
<sequence length="107" mass="12004">MIIVTNTAKITKGNGHKLIDRFNKVGQVETMPGFLGLEVLLTQNTVDYDEVTISTRWNAKEDFQGWTKSPAFKAAHSHQGGMPDYILDNKISYYDVKVVRMPMAAAQ</sequence>
<comment type="function">
    <text evidence="1">Allows bacterial pathogens to use the host heme as an iron source. Catalyzes the oxidative degradation of the heme macrocyclic porphyrin ring to the biliverdin in the presence of a suitable electron donor such as ascorbate or NADPH--cytochrome P450 reductase, with subsequent release of free iron.</text>
</comment>
<comment type="catalytic activity">
    <reaction evidence="1">
        <text>heme b + 3 reduced [NADPH--hemoprotein reductase] + 3 O2 = biliverdin IXalpha + CO + Fe(2+) + 3 oxidized [NADPH--hemoprotein reductase] + 3 H2O + H(+)</text>
        <dbReference type="Rhea" id="RHEA:21764"/>
        <dbReference type="Rhea" id="RHEA-COMP:11964"/>
        <dbReference type="Rhea" id="RHEA-COMP:11965"/>
        <dbReference type="ChEBI" id="CHEBI:15377"/>
        <dbReference type="ChEBI" id="CHEBI:15378"/>
        <dbReference type="ChEBI" id="CHEBI:15379"/>
        <dbReference type="ChEBI" id="CHEBI:17245"/>
        <dbReference type="ChEBI" id="CHEBI:29033"/>
        <dbReference type="ChEBI" id="CHEBI:57618"/>
        <dbReference type="ChEBI" id="CHEBI:57991"/>
        <dbReference type="ChEBI" id="CHEBI:58210"/>
        <dbReference type="ChEBI" id="CHEBI:60344"/>
        <dbReference type="EC" id="1.14.14.18"/>
    </reaction>
</comment>
<comment type="subunit">
    <text evidence="1">Homodimer.</text>
</comment>
<comment type="subcellular location">
    <subcellularLocation>
        <location evidence="1">Cytoplasm</location>
    </subcellularLocation>
</comment>
<comment type="similarity">
    <text evidence="1">Belongs to the antibiotic biosynthesis monooxygenase family. Heme-degrading monooxygenase IsdG subfamily.</text>
</comment>
<accession>B7HRI4</accession>
<protein>
    <recommendedName>
        <fullName evidence="1">Heme-degrading monooxygenase</fullName>
        <ecNumber evidence="1">1.14.14.18</ecNumber>
    </recommendedName>
    <alternativeName>
        <fullName evidence="1">Heme oxygenase</fullName>
    </alternativeName>
    <alternativeName>
        <fullName evidence="1">Iron-regulated surface determinant</fullName>
    </alternativeName>
    <alternativeName>
        <fullName evidence="1">Iron-responsive surface determinant</fullName>
    </alternativeName>
</protein>
<gene>
    <name evidence="1" type="primary">isdG</name>
    <name type="ordered locus">BCAH187_A4669</name>
</gene>